<proteinExistence type="evidence at protein level"/>
<dbReference type="EMBL" id="X64098">
    <property type="protein sequence ID" value="CAA45465.1"/>
    <property type="molecule type" value="Genomic_DNA"/>
</dbReference>
<dbReference type="EMBL" id="M93963">
    <property type="protein sequence ID" value="AAA27565.1"/>
    <property type="molecule type" value="Genomic_DNA"/>
</dbReference>
<dbReference type="EMBL" id="AE003852">
    <property type="protein sequence ID" value="AAF94001.1"/>
    <property type="molecule type" value="Genomic_DNA"/>
</dbReference>
<dbReference type="EMBL" id="L01623">
    <property type="protein sequence ID" value="AAA27567.1"/>
    <property type="molecule type" value="Genomic_DNA"/>
</dbReference>
<dbReference type="PIR" id="B45247">
    <property type="entry name" value="B45247"/>
</dbReference>
<dbReference type="PIR" id="C82273">
    <property type="entry name" value="C82273"/>
</dbReference>
<dbReference type="PIR" id="S23274">
    <property type="entry name" value="S23274"/>
</dbReference>
<dbReference type="RefSeq" id="NP_230486.1">
    <property type="nucleotide sequence ID" value="NC_002505.1"/>
</dbReference>
<dbReference type="RefSeq" id="WP_000579582.1">
    <property type="nucleotide sequence ID" value="NZ_LT906614.1"/>
</dbReference>
<dbReference type="SMR" id="P0C6D6"/>
<dbReference type="DIP" id="DIP-60864N"/>
<dbReference type="STRING" id="243277.VC_0838"/>
<dbReference type="DNASU" id="2614505"/>
<dbReference type="EnsemblBacteria" id="AAF94001">
    <property type="protein sequence ID" value="AAF94001"/>
    <property type="gene ID" value="VC_0838"/>
</dbReference>
<dbReference type="KEGG" id="vch:VC_0838"/>
<dbReference type="PATRIC" id="fig|243277.26.peg.799"/>
<dbReference type="eggNOG" id="COG2207">
    <property type="taxonomic scope" value="Bacteria"/>
</dbReference>
<dbReference type="HOGENOM" id="CLU_1004526_0_0_6"/>
<dbReference type="Proteomes" id="UP000000584">
    <property type="component" value="Chromosome 1"/>
</dbReference>
<dbReference type="GO" id="GO:0005737">
    <property type="term" value="C:cytoplasm"/>
    <property type="evidence" value="ECO:0007669"/>
    <property type="project" value="UniProtKB-SubCell"/>
</dbReference>
<dbReference type="GO" id="GO:0003700">
    <property type="term" value="F:DNA-binding transcription factor activity"/>
    <property type="evidence" value="ECO:0007669"/>
    <property type="project" value="InterPro"/>
</dbReference>
<dbReference type="GO" id="GO:0042802">
    <property type="term" value="F:identical protein binding"/>
    <property type="evidence" value="ECO:0000353"/>
    <property type="project" value="IntAct"/>
</dbReference>
<dbReference type="GO" id="GO:0043565">
    <property type="term" value="F:sequence-specific DNA binding"/>
    <property type="evidence" value="ECO:0007669"/>
    <property type="project" value="InterPro"/>
</dbReference>
<dbReference type="Gene3D" id="2.60.120.810">
    <property type="match status" value="1"/>
</dbReference>
<dbReference type="Gene3D" id="1.10.10.60">
    <property type="entry name" value="Homeodomain-like"/>
    <property type="match status" value="1"/>
</dbReference>
<dbReference type="Gene3D" id="1.10.10.1310">
    <property type="entry name" value="ToxT, HTH1 motif"/>
    <property type="match status" value="1"/>
</dbReference>
<dbReference type="InterPro" id="IPR009057">
    <property type="entry name" value="Homeodomain-like_sf"/>
</dbReference>
<dbReference type="InterPro" id="IPR018060">
    <property type="entry name" value="HTH_AraC"/>
</dbReference>
<dbReference type="InterPro" id="IPR018062">
    <property type="entry name" value="HTH_AraC-typ_CS"/>
</dbReference>
<dbReference type="InterPro" id="IPR044875">
    <property type="entry name" value="ToxT_HTH1"/>
</dbReference>
<dbReference type="InterPro" id="IPR055025">
    <property type="entry name" value="ToxT_N"/>
</dbReference>
<dbReference type="InterPro" id="IPR020449">
    <property type="entry name" value="Tscrpt_reg_AraC-type_HTH"/>
</dbReference>
<dbReference type="PANTHER" id="PTHR43280">
    <property type="entry name" value="ARAC-FAMILY TRANSCRIPTIONAL REGULATOR"/>
    <property type="match status" value="1"/>
</dbReference>
<dbReference type="PANTHER" id="PTHR43280:SF28">
    <property type="entry name" value="HTH-TYPE TRANSCRIPTIONAL ACTIVATOR RHAS"/>
    <property type="match status" value="1"/>
</dbReference>
<dbReference type="Pfam" id="PF00165">
    <property type="entry name" value="HTH_AraC"/>
    <property type="match status" value="1"/>
</dbReference>
<dbReference type="Pfam" id="PF22404">
    <property type="entry name" value="ToxT_N"/>
    <property type="match status" value="1"/>
</dbReference>
<dbReference type="PRINTS" id="PR00032">
    <property type="entry name" value="HTHARAC"/>
</dbReference>
<dbReference type="SMART" id="SM00342">
    <property type="entry name" value="HTH_ARAC"/>
    <property type="match status" value="1"/>
</dbReference>
<dbReference type="SUPFAM" id="SSF46689">
    <property type="entry name" value="Homeodomain-like"/>
    <property type="match status" value="1"/>
</dbReference>
<dbReference type="PROSITE" id="PS00041">
    <property type="entry name" value="HTH_ARAC_FAMILY_1"/>
    <property type="match status" value="1"/>
</dbReference>
<dbReference type="PROSITE" id="PS01124">
    <property type="entry name" value="HTH_ARAC_FAMILY_2"/>
    <property type="match status" value="1"/>
</dbReference>
<gene>
    <name type="primary">tcpN</name>
    <name type="synonym">toxT</name>
    <name type="ordered locus">VC_0838</name>
</gene>
<organism>
    <name type="scientific">Vibrio cholerae serotype O1 (strain ATCC 39315 / El Tor Inaba N16961)</name>
    <dbReference type="NCBI Taxonomy" id="243277"/>
    <lineage>
        <taxon>Bacteria</taxon>
        <taxon>Pseudomonadati</taxon>
        <taxon>Pseudomonadota</taxon>
        <taxon>Gammaproteobacteria</taxon>
        <taxon>Vibrionales</taxon>
        <taxon>Vibrionaceae</taxon>
        <taxon>Vibrio</taxon>
    </lineage>
</organism>
<name>TCPN_VIBCH</name>
<keyword id="KW-0010">Activator</keyword>
<keyword id="KW-0963">Cytoplasm</keyword>
<keyword id="KW-0238">DNA-binding</keyword>
<keyword id="KW-1185">Reference proteome</keyword>
<keyword id="KW-0804">Transcription</keyword>
<keyword id="KW-0805">Transcription regulation</keyword>
<keyword id="KW-0843">Virulence</keyword>
<reference key="1">
    <citation type="journal article" date="1992" name="Gene">
        <title>Homology of TcpN, a putative regulatory protein of Vibrio cholerae, to the AraC family of transcriptional activators.</title>
        <authorList>
            <person name="Ogierman M.A."/>
            <person name="Manning P.A."/>
        </authorList>
    </citation>
    <scope>NUCLEOTIDE SEQUENCE [GENOMIC DNA]</scope>
    <source>
        <strain>Classical Inaba Z17561 / Serotype O1</strain>
    </source>
</reference>
<reference key="2">
    <citation type="journal article" date="1992" name="J. Bacteriol.">
        <title>The virulence gene activator ToxT from Vibrio cholerae is a member of the AraC family of transcriptional activators.</title>
        <authorList>
            <person name="Higgins D.E."/>
            <person name="Nazareno E."/>
            <person name="DiRita V.J."/>
        </authorList>
    </citation>
    <scope>NUCLEOTIDE SEQUENCE [GENOMIC DNA]</scope>
    <source>
        <strain>ATCC 25870 / Classical Inaba 569B / Serotype O1</strain>
    </source>
</reference>
<reference key="3">
    <citation type="journal article" date="2000" name="Nature">
        <title>DNA sequence of both chromosomes of the cholera pathogen Vibrio cholerae.</title>
        <authorList>
            <person name="Heidelberg J.F."/>
            <person name="Eisen J.A."/>
            <person name="Nelson W.C."/>
            <person name="Clayton R.A."/>
            <person name="Gwinn M.L."/>
            <person name="Dodson R.J."/>
            <person name="Haft D.H."/>
            <person name="Hickey E.K."/>
            <person name="Peterson J.D."/>
            <person name="Umayam L.A."/>
            <person name="Gill S.R."/>
            <person name="Nelson K.E."/>
            <person name="Read T.D."/>
            <person name="Tettelin H."/>
            <person name="Richardson D.L."/>
            <person name="Ermolaeva M.D."/>
            <person name="Vamathevan J.J."/>
            <person name="Bass S."/>
            <person name="Qin H."/>
            <person name="Dragoi I."/>
            <person name="Sellers P."/>
            <person name="McDonald L.A."/>
            <person name="Utterback T.R."/>
            <person name="Fleischmann R.D."/>
            <person name="Nierman W.C."/>
            <person name="White O."/>
            <person name="Salzberg S.L."/>
            <person name="Smith H.O."/>
            <person name="Colwell R.R."/>
            <person name="Mekalanos J.J."/>
            <person name="Venter J.C."/>
            <person name="Fraser C.M."/>
        </authorList>
    </citation>
    <scope>NUCLEOTIDE SEQUENCE [LARGE SCALE GENOMIC DNA]</scope>
    <source>
        <strain>ATCC 39315 / El Tor Inaba N16961</strain>
    </source>
</reference>
<reference key="4">
    <citation type="journal article" date="1993" name="Gene">
        <title>Biogenesis and regulation of the Vibrio cholerae toxin-coregulated pilus: analogies to other virulence factor secretory systems.</title>
        <authorList>
            <person name="Kaufman M.R."/>
            <person name="Shaw C.E."/>
            <person name="Jones I.D."/>
            <person name="Taylor R.K."/>
        </authorList>
    </citation>
    <scope>NUCLEOTIDE SEQUENCE [GENOMIC DNA] OF 1-22</scope>
</reference>
<evidence type="ECO:0000255" key="1">
    <source>
        <dbReference type="PROSITE-ProRule" id="PRU00593"/>
    </source>
</evidence>
<evidence type="ECO:0000305" key="2"/>
<comment type="function">
    <text>Probable regulatory protein for the tcp operon.</text>
</comment>
<comment type="interaction">
    <interactant intactId="EBI-15621125">
        <id>P0C6D6</id>
    </interactant>
    <interactant intactId="EBI-15621125">
        <id>P0C6D6</id>
        <label>tcpN</label>
    </interactant>
    <organismsDiffer>false</organismsDiffer>
    <experiments>2</experiments>
</comment>
<comment type="subcellular location">
    <subcellularLocation>
        <location>Cytoplasm</location>
    </subcellularLocation>
</comment>
<accession>P0C6D6</accession>
<accession>P29492</accession>
<accession>Q9KTQ8</accession>
<feature type="chain" id="PRO_0000194587" description="TCP pilus virulence regulatory protein">
    <location>
        <begin position="1"/>
        <end position="276"/>
    </location>
</feature>
<feature type="domain" description="HTH araC/xylS-type" evidence="1">
    <location>
        <begin position="172"/>
        <end position="269"/>
    </location>
</feature>
<feature type="DNA-binding region" description="H-T-H motif" evidence="1">
    <location>
        <begin position="189"/>
        <end position="210"/>
    </location>
</feature>
<feature type="DNA-binding region" description="H-T-H motif" evidence="1">
    <location>
        <begin position="236"/>
        <end position="259"/>
    </location>
</feature>
<feature type="sequence conflict" description="In Ref. 2; AAA27567." evidence="2" ref="2">
    <original>S</original>
    <variation>A</variation>
    <location>
        <position position="65"/>
    </location>
</feature>
<feature type="sequence conflict" description="In Ref. 1; CAA45465." evidence="2" ref="1">
    <original>Y</original>
    <variation>N</variation>
    <location>
        <position position="250"/>
    </location>
</feature>
<protein>
    <recommendedName>
        <fullName>TCP pilus virulence regulatory protein</fullName>
    </recommendedName>
</protein>
<sequence>MIGKKSFQTNVYRMSKFDTYIFNNLYINDYKMFWIDSGIAKLIDKNCLVSYEINSSSIILLKKNSIQRFSLTSLSDENINVSVITISDSFIRSLKSYILGDLMIRNLYSENKDLLLWNCEHNDIAVLSEVVNGFREINYSDEFLKVFFSGFFSKVEKKYNSIFITDDLDAMEKISCLVKSDITRNWRWADICGELRTNRMILKKELESRGVKFRELINSIRISYSISLMKTGEFKIKQIAYQSGFASVSYFSTVFKSTMNVAPSEYLFMLTGVAEK</sequence>